<reference key="1">
    <citation type="journal article" date="2001" name="Appl. Environ. Microbiol.">
        <title>Active subtilisin-like protease from a hyperthermophilic archaeon in a form with a putative prosequence.</title>
        <authorList>
            <person name="Kannan Y."/>
            <person name="Koga Y."/>
            <person name="Inoue Y."/>
            <person name="Haruki M."/>
            <person name="Takagi M."/>
            <person name="Imanaka T."/>
            <person name="Morikawa M."/>
            <person name="Kanaya S."/>
        </authorList>
    </citation>
    <scope>NUCLEOTIDE SEQUENCE [GENOMIC DNA]</scope>
    <scope>CHARACTERIZATION</scope>
    <source>
        <strain>ATCC BAA-918 / JCM 12380 / KOD1</strain>
    </source>
</reference>
<reference key="2">
    <citation type="journal article" date="2005" name="Genome Res.">
        <title>Complete genome sequence of the hyperthermophilic archaeon Thermococcus kodakaraensis KOD1 and comparison with Pyrococcus genomes.</title>
        <authorList>
            <person name="Fukui T."/>
            <person name="Atomi H."/>
            <person name="Kanai T."/>
            <person name="Matsumi R."/>
            <person name="Fujiwara S."/>
            <person name="Imanaka T."/>
        </authorList>
    </citation>
    <scope>NUCLEOTIDE SEQUENCE [LARGE SCALE GENOMIC DNA]</scope>
    <source>
        <strain>ATCC BAA-918 / JCM 12380 / KOD1</strain>
    </source>
</reference>
<comment type="function">
    <text>Has a broad substrate specificity with a slight preference to large hydrophobic amino acid residues at the P1 position.</text>
</comment>
<comment type="cofactor">
    <cofactor>
        <name>Ca(2+)</name>
        <dbReference type="ChEBI" id="CHEBI:29108"/>
    </cofactor>
</comment>
<comment type="biophysicochemical properties">
    <phDependence>
        <text>Optimum pH is 9.5.</text>
    </phDependence>
    <temperatureDependence>
        <text>Thermostable. Highly active at 80 degrees Celsius.</text>
    </temperatureDependence>
</comment>
<comment type="subunit">
    <text>Monomer.</text>
</comment>
<comment type="interaction">
    <interactant intactId="EBI-7810114">
        <id>P58502</id>
    </interactant>
    <interactant intactId="EBI-7810114">
        <id>P58502</id>
        <label>TK1675</label>
    </interactant>
    <organismsDiffer>false</organismsDiffer>
    <experiments>2</experiments>
</comment>
<comment type="subcellular location">
    <subcellularLocation>
        <location>Secreted</location>
    </subcellularLocation>
</comment>
<comment type="similarity">
    <text evidence="3">Belongs to the peptidase S8 family.</text>
</comment>
<sequence length="422" mass="43786">MKKSIALVLSIVLLAALFAVPASAGEQNTIRVIVSVDKAKFNPHEVLGIGGHIVYQFKLIPAVVVDVPANAVGKLKKMPGVEKVEFDHQAVLLGKPSWLGGGSTQPAQTIPWGIERVKAPSVWSITDGSVSVIQVAVLDTGVDYDHPDLAANIAWCVSTLRGKVSTKLRDCADQNGHGTHVIGTIAALNNDIGVVGVAPGVQIYSVRVLDARGSGSYSDIAIGIEQAILGPDGVADKDGDGIIAGDPDDDAAEVISMSLGGPADDSYLYDMIIQAYNAGIVIVAASGNEGAPSPSYPAAYPEVIAVGAIDSNDNIASFSNRQPEVSAPGVDILSTYPDDSYETLMGTSMATPHVSGVVALIQAAYYQKYGKILPVGTFDDISKNTVRGILHITADDLGPTGWDADYGYGVVRAALAVQAALG</sequence>
<gene>
    <name type="ordered locus">TK1675</name>
</gene>
<keyword id="KW-0002">3D-structure</keyword>
<keyword id="KW-0106">Calcium</keyword>
<keyword id="KW-0378">Hydrolase</keyword>
<keyword id="KW-0645">Protease</keyword>
<keyword id="KW-1185">Reference proteome</keyword>
<keyword id="KW-0964">Secreted</keyword>
<keyword id="KW-0720">Serine protease</keyword>
<keyword id="KW-0732">Signal</keyword>
<keyword id="KW-0865">Zymogen</keyword>
<protein>
    <recommendedName>
        <fullName>Tk-subtilisin</fullName>
        <ecNumber>3.4.21.-</ecNumber>
    </recommendedName>
</protein>
<organism>
    <name type="scientific">Thermococcus kodakarensis (strain ATCC BAA-918 / JCM 12380 / KOD1)</name>
    <name type="common">Pyrococcus kodakaraensis (strain KOD1)</name>
    <dbReference type="NCBI Taxonomy" id="69014"/>
    <lineage>
        <taxon>Archaea</taxon>
        <taxon>Methanobacteriati</taxon>
        <taxon>Methanobacteriota</taxon>
        <taxon>Thermococci</taxon>
        <taxon>Thermococcales</taxon>
        <taxon>Thermococcaceae</taxon>
        <taxon>Thermococcus</taxon>
    </lineage>
</organism>
<feature type="signal peptide" evidence="1">
    <location>
        <begin position="1"/>
        <end position="24"/>
    </location>
</feature>
<feature type="propeptide" id="PRO_0000027195" evidence="1">
    <location>
        <begin position="25"/>
        <end position="106"/>
    </location>
</feature>
<feature type="chain" id="PRO_0000027196" description="Tk-subtilisin">
    <location>
        <begin position="107"/>
        <end position="422"/>
    </location>
</feature>
<feature type="domain" description="Peptidase S8" evidence="2">
    <location>
        <begin position="111"/>
        <end position="417"/>
    </location>
</feature>
<feature type="active site" description="Charge relay system" evidence="2">
    <location>
        <position position="139"/>
    </location>
</feature>
<feature type="active site" description="Charge relay system" evidence="2">
    <location>
        <position position="177"/>
    </location>
</feature>
<feature type="active site" description="Charge relay system" evidence="2">
    <location>
        <position position="348"/>
    </location>
</feature>
<feature type="strand" evidence="5">
    <location>
        <begin position="30"/>
        <end position="36"/>
    </location>
</feature>
<feature type="helix" evidence="5">
    <location>
        <begin position="38"/>
        <end position="40"/>
    </location>
</feature>
<feature type="helix" evidence="5">
    <location>
        <begin position="43"/>
        <end position="49"/>
    </location>
</feature>
<feature type="strand" evidence="5">
    <location>
        <begin position="52"/>
        <end position="56"/>
    </location>
</feature>
<feature type="strand" evidence="5">
    <location>
        <begin position="58"/>
        <end position="67"/>
    </location>
</feature>
<feature type="helix" evidence="5">
    <location>
        <begin position="69"/>
        <end position="71"/>
    </location>
</feature>
<feature type="helix" evidence="5">
    <location>
        <begin position="72"/>
        <end position="76"/>
    </location>
</feature>
<feature type="strand" evidence="5">
    <location>
        <begin position="81"/>
        <end position="86"/>
    </location>
</feature>
<feature type="strand" evidence="5">
    <location>
        <begin position="89"/>
        <end position="92"/>
    </location>
</feature>
<feature type="strand" evidence="7">
    <location>
        <begin position="95"/>
        <end position="98"/>
    </location>
</feature>
<feature type="strand" evidence="6">
    <location>
        <begin position="105"/>
        <end position="107"/>
    </location>
</feature>
<feature type="helix" evidence="5">
    <location>
        <begin position="112"/>
        <end position="116"/>
    </location>
</feature>
<feature type="helix" evidence="5">
    <location>
        <begin position="120"/>
        <end position="122"/>
    </location>
</feature>
<feature type="turn" evidence="5">
    <location>
        <begin position="123"/>
        <end position="125"/>
    </location>
</feature>
<feature type="strand" evidence="5">
    <location>
        <begin position="134"/>
        <end position="140"/>
    </location>
</feature>
<feature type="turn" evidence="5">
    <location>
        <begin position="147"/>
        <end position="149"/>
    </location>
</feature>
<feature type="helix" evidence="5">
    <location>
        <begin position="150"/>
        <end position="152"/>
    </location>
</feature>
<feature type="strand" evidence="5">
    <location>
        <begin position="153"/>
        <end position="158"/>
    </location>
</feature>
<feature type="helix" evidence="5">
    <location>
        <begin position="160"/>
        <end position="162"/>
    </location>
</feature>
<feature type="helix" evidence="5">
    <location>
        <begin position="168"/>
        <end position="171"/>
    </location>
</feature>
<feature type="strand" evidence="5">
    <location>
        <begin position="174"/>
        <end position="176"/>
    </location>
</feature>
<feature type="helix" evidence="5">
    <location>
        <begin position="177"/>
        <end position="186"/>
    </location>
</feature>
<feature type="strand" evidence="5">
    <location>
        <begin position="189"/>
        <end position="193"/>
    </location>
</feature>
<feature type="strand" evidence="5">
    <location>
        <begin position="202"/>
        <end position="207"/>
    </location>
</feature>
<feature type="strand" evidence="5">
    <location>
        <begin position="213"/>
        <end position="216"/>
    </location>
</feature>
<feature type="helix" evidence="5">
    <location>
        <begin position="217"/>
        <end position="229"/>
    </location>
</feature>
<feature type="turn" evidence="5">
    <location>
        <begin position="230"/>
        <end position="233"/>
    </location>
</feature>
<feature type="strand" evidence="5">
    <location>
        <begin position="239"/>
        <end position="241"/>
    </location>
</feature>
<feature type="strand" evidence="5">
    <location>
        <begin position="253"/>
        <end position="257"/>
    </location>
</feature>
<feature type="strand" evidence="5">
    <location>
        <begin position="259"/>
        <end position="262"/>
    </location>
</feature>
<feature type="helix" evidence="5">
    <location>
        <begin position="266"/>
        <end position="277"/>
    </location>
</feature>
<feature type="strand" evidence="5">
    <location>
        <begin position="281"/>
        <end position="285"/>
    </location>
</feature>
<feature type="turn" evidence="5">
    <location>
        <begin position="297"/>
        <end position="299"/>
    </location>
</feature>
<feature type="strand" evidence="5">
    <location>
        <begin position="303"/>
        <end position="309"/>
    </location>
</feature>
<feature type="strand" evidence="5">
    <location>
        <begin position="324"/>
        <end position="328"/>
    </location>
</feature>
<feature type="strand" evidence="5">
    <location>
        <begin position="330"/>
        <end position="336"/>
    </location>
</feature>
<feature type="turn" evidence="5">
    <location>
        <begin position="337"/>
        <end position="339"/>
    </location>
</feature>
<feature type="strand" evidence="5">
    <location>
        <begin position="340"/>
        <end position="344"/>
    </location>
</feature>
<feature type="helix" evidence="5">
    <location>
        <begin position="347"/>
        <end position="369"/>
    </location>
</feature>
<feature type="strand" evidence="4">
    <location>
        <begin position="382"/>
        <end position="385"/>
    </location>
</feature>
<feature type="helix" evidence="5">
    <location>
        <begin position="386"/>
        <end position="393"/>
    </location>
</feature>
<feature type="strand" evidence="5">
    <location>
        <begin position="398"/>
        <end position="403"/>
    </location>
</feature>
<feature type="turn" evidence="5">
    <location>
        <begin position="404"/>
        <end position="406"/>
    </location>
</feature>
<feature type="helix" evidence="5">
    <location>
        <begin position="413"/>
        <end position="421"/>
    </location>
</feature>
<evidence type="ECO:0000255" key="1"/>
<evidence type="ECO:0000255" key="2">
    <source>
        <dbReference type="PROSITE-ProRule" id="PRU01240"/>
    </source>
</evidence>
<evidence type="ECO:0000305" key="3"/>
<evidence type="ECO:0007829" key="4">
    <source>
        <dbReference type="PDB" id="2Z2X"/>
    </source>
</evidence>
<evidence type="ECO:0007829" key="5">
    <source>
        <dbReference type="PDB" id="2Z30"/>
    </source>
</evidence>
<evidence type="ECO:0007829" key="6">
    <source>
        <dbReference type="PDB" id="3WIU"/>
    </source>
</evidence>
<evidence type="ECO:0007829" key="7">
    <source>
        <dbReference type="PDB" id="4JP8"/>
    </source>
</evidence>
<dbReference type="EC" id="3.4.21.-"/>
<dbReference type="EMBL" id="AB056701">
    <property type="protein sequence ID" value="BAB60701.1"/>
    <property type="molecule type" value="Genomic_DNA"/>
</dbReference>
<dbReference type="EMBL" id="AP006878">
    <property type="protein sequence ID" value="BAD85864.1"/>
    <property type="molecule type" value="Genomic_DNA"/>
</dbReference>
<dbReference type="RefSeq" id="WP_011250626.1">
    <property type="nucleotide sequence ID" value="NC_006624.1"/>
</dbReference>
<dbReference type="PDB" id="2E1P">
    <property type="method" value="X-ray"/>
    <property type="resolution" value="2.30 A"/>
    <property type="chains" value="A=25-422"/>
</dbReference>
<dbReference type="PDB" id="2Z2X">
    <property type="method" value="X-ray"/>
    <property type="resolution" value="1.70 A"/>
    <property type="chains" value="A=105-422"/>
</dbReference>
<dbReference type="PDB" id="2Z2Y">
    <property type="method" value="X-ray"/>
    <property type="resolution" value="1.89 A"/>
    <property type="chains" value="A/C=105-422, B/D=29-93"/>
</dbReference>
<dbReference type="PDB" id="2Z2Z">
    <property type="method" value="X-ray"/>
    <property type="resolution" value="1.87 A"/>
    <property type="chains" value="A=28-422"/>
</dbReference>
<dbReference type="PDB" id="2Z30">
    <property type="method" value="X-ray"/>
    <property type="resolution" value="1.65 A"/>
    <property type="chains" value="A=103-422, B=29-93"/>
</dbReference>
<dbReference type="PDB" id="2Z56">
    <property type="method" value="X-ray"/>
    <property type="resolution" value="1.90 A"/>
    <property type="chains" value="A=105-422, B=29-93"/>
</dbReference>
<dbReference type="PDB" id="2Z57">
    <property type="method" value="X-ray"/>
    <property type="resolution" value="1.80 A"/>
    <property type="chains" value="A=105-422, B=29-93"/>
</dbReference>
<dbReference type="PDB" id="2Z58">
    <property type="method" value="X-ray"/>
    <property type="resolution" value="1.88 A"/>
    <property type="chains" value="A=105-422, B=28-93"/>
</dbReference>
<dbReference type="PDB" id="2ZRQ">
    <property type="method" value="X-ray"/>
    <property type="resolution" value="2.16 A"/>
    <property type="chains" value="A=94-422"/>
</dbReference>
<dbReference type="PDB" id="2ZWO">
    <property type="method" value="X-ray"/>
    <property type="resolution" value="2.07 A"/>
    <property type="chains" value="A/B/C=25-422"/>
</dbReference>
<dbReference type="PDB" id="2ZWP">
    <property type="method" value="X-ray"/>
    <property type="resolution" value="2.40 A"/>
    <property type="chains" value="A/B=25-422"/>
</dbReference>
<dbReference type="PDB" id="3A3N">
    <property type="method" value="X-ray"/>
    <property type="resolution" value="2.20 A"/>
    <property type="chains" value="A=94-422, B=25-91"/>
</dbReference>
<dbReference type="PDB" id="3A3O">
    <property type="method" value="X-ray"/>
    <property type="resolution" value="1.90 A"/>
    <property type="chains" value="A=94-422, B=25-88"/>
</dbReference>
<dbReference type="PDB" id="3A3P">
    <property type="method" value="X-ray"/>
    <property type="resolution" value="1.90 A"/>
    <property type="chains" value="A=94-422, B=25-93"/>
</dbReference>
<dbReference type="PDB" id="3VHQ">
    <property type="method" value="X-ray"/>
    <property type="resolution" value="2.15 A"/>
    <property type="chains" value="A=25-422"/>
</dbReference>
<dbReference type="PDB" id="3VV2">
    <property type="method" value="X-ray"/>
    <property type="resolution" value="1.83 A"/>
    <property type="chains" value="A=94-422, B=25-93"/>
</dbReference>
<dbReference type="PDB" id="3WIU">
    <property type="method" value="X-ray"/>
    <property type="resolution" value="1.80 A"/>
    <property type="chains" value="A/B/C=25-422"/>
</dbReference>
<dbReference type="PDB" id="3WIV">
    <property type="method" value="X-ray"/>
    <property type="resolution" value="1.90 A"/>
    <property type="chains" value="A/B/C=25-422"/>
</dbReference>
<dbReference type="PDB" id="4JP8">
    <property type="method" value="X-ray"/>
    <property type="resolution" value="2.21 A"/>
    <property type="chains" value="A=25-422"/>
</dbReference>
<dbReference type="PDBsum" id="2E1P"/>
<dbReference type="PDBsum" id="2Z2X"/>
<dbReference type="PDBsum" id="2Z2Y"/>
<dbReference type="PDBsum" id="2Z2Z"/>
<dbReference type="PDBsum" id="2Z30"/>
<dbReference type="PDBsum" id="2Z56"/>
<dbReference type="PDBsum" id="2Z57"/>
<dbReference type="PDBsum" id="2Z58"/>
<dbReference type="PDBsum" id="2ZRQ"/>
<dbReference type="PDBsum" id="2ZWO"/>
<dbReference type="PDBsum" id="2ZWP"/>
<dbReference type="PDBsum" id="3A3N"/>
<dbReference type="PDBsum" id="3A3O"/>
<dbReference type="PDBsum" id="3A3P"/>
<dbReference type="PDBsum" id="3VHQ"/>
<dbReference type="PDBsum" id="3VV2"/>
<dbReference type="PDBsum" id="3WIU"/>
<dbReference type="PDBsum" id="3WIV"/>
<dbReference type="PDBsum" id="4JP8"/>
<dbReference type="SMR" id="P58502"/>
<dbReference type="MINT" id="P58502"/>
<dbReference type="STRING" id="69014.TK1675"/>
<dbReference type="MEROPS" id="S08.129"/>
<dbReference type="EnsemblBacteria" id="BAD85864">
    <property type="protein sequence ID" value="BAD85864"/>
    <property type="gene ID" value="TK1675"/>
</dbReference>
<dbReference type="GeneID" id="78448202"/>
<dbReference type="KEGG" id="tko:TK1675"/>
<dbReference type="PATRIC" id="fig|69014.16.peg.1633"/>
<dbReference type="eggNOG" id="arCOG00702">
    <property type="taxonomic scope" value="Archaea"/>
</dbReference>
<dbReference type="HOGENOM" id="CLU_011263_15_0_2"/>
<dbReference type="InParanoid" id="P58502"/>
<dbReference type="OrthoDB" id="341609at2157"/>
<dbReference type="PhylomeDB" id="P58502"/>
<dbReference type="BRENDA" id="3.4.21.B57">
    <property type="organism ID" value="5246"/>
</dbReference>
<dbReference type="EvolutionaryTrace" id="P58502"/>
<dbReference type="Proteomes" id="UP000000536">
    <property type="component" value="Chromosome"/>
</dbReference>
<dbReference type="GO" id="GO:0005576">
    <property type="term" value="C:extracellular region"/>
    <property type="evidence" value="ECO:0007669"/>
    <property type="project" value="UniProtKB-SubCell"/>
</dbReference>
<dbReference type="GO" id="GO:0042802">
    <property type="term" value="F:identical protein binding"/>
    <property type="evidence" value="ECO:0000353"/>
    <property type="project" value="IntAct"/>
</dbReference>
<dbReference type="GO" id="GO:0004252">
    <property type="term" value="F:serine-type endopeptidase activity"/>
    <property type="evidence" value="ECO:0007669"/>
    <property type="project" value="InterPro"/>
</dbReference>
<dbReference type="GO" id="GO:0006508">
    <property type="term" value="P:proteolysis"/>
    <property type="evidence" value="ECO:0007669"/>
    <property type="project" value="UniProtKB-KW"/>
</dbReference>
<dbReference type="CDD" id="cd07477">
    <property type="entry name" value="Peptidases_S8_Subtilisin_subset"/>
    <property type="match status" value="1"/>
</dbReference>
<dbReference type="FunFam" id="3.40.50.200:FF:000055">
    <property type="entry name" value="Tk-subtilisin"/>
    <property type="match status" value="1"/>
</dbReference>
<dbReference type="Gene3D" id="3.30.70.80">
    <property type="entry name" value="Peptidase S8 propeptide/proteinase inhibitor I9"/>
    <property type="match status" value="1"/>
</dbReference>
<dbReference type="Gene3D" id="3.40.50.200">
    <property type="entry name" value="Peptidase S8/S53 domain"/>
    <property type="match status" value="1"/>
</dbReference>
<dbReference type="InterPro" id="IPR000209">
    <property type="entry name" value="Peptidase_S8/S53_dom"/>
</dbReference>
<dbReference type="InterPro" id="IPR036852">
    <property type="entry name" value="Peptidase_S8/S53_dom_sf"/>
</dbReference>
<dbReference type="InterPro" id="IPR051048">
    <property type="entry name" value="Peptidase_S8/S53_subtilisin"/>
</dbReference>
<dbReference type="InterPro" id="IPR023827">
    <property type="entry name" value="Peptidase_S8_Asp-AS"/>
</dbReference>
<dbReference type="InterPro" id="IPR023828">
    <property type="entry name" value="Peptidase_S8_Ser-AS"/>
</dbReference>
<dbReference type="InterPro" id="IPR015500">
    <property type="entry name" value="Peptidase_S8_subtilisin-rel"/>
</dbReference>
<dbReference type="InterPro" id="IPR037045">
    <property type="entry name" value="S8pro/Inhibitor_I9_sf"/>
</dbReference>
<dbReference type="InterPro" id="IPR034202">
    <property type="entry name" value="Subtilisin_Carlsberg-like"/>
</dbReference>
<dbReference type="PANTHER" id="PTHR43399:SF4">
    <property type="entry name" value="CELL WALL-ASSOCIATED PROTEASE"/>
    <property type="match status" value="1"/>
</dbReference>
<dbReference type="PANTHER" id="PTHR43399">
    <property type="entry name" value="SUBTILISIN-RELATED"/>
    <property type="match status" value="1"/>
</dbReference>
<dbReference type="Pfam" id="PF00082">
    <property type="entry name" value="Peptidase_S8"/>
    <property type="match status" value="1"/>
</dbReference>
<dbReference type="PRINTS" id="PR00723">
    <property type="entry name" value="SUBTILISIN"/>
</dbReference>
<dbReference type="SUPFAM" id="SSF54897">
    <property type="entry name" value="Protease propeptides/inhibitors"/>
    <property type="match status" value="1"/>
</dbReference>
<dbReference type="SUPFAM" id="SSF52743">
    <property type="entry name" value="Subtilisin-like"/>
    <property type="match status" value="1"/>
</dbReference>
<dbReference type="PROSITE" id="PS51892">
    <property type="entry name" value="SUBTILASE"/>
    <property type="match status" value="1"/>
</dbReference>
<dbReference type="PROSITE" id="PS00136">
    <property type="entry name" value="SUBTILASE_ASP"/>
    <property type="match status" value="1"/>
</dbReference>
<dbReference type="PROSITE" id="PS00138">
    <property type="entry name" value="SUBTILASE_SER"/>
    <property type="match status" value="1"/>
</dbReference>
<proteinExistence type="evidence at protein level"/>
<name>TKSU_THEKO</name>
<accession>P58502</accession>
<accession>Q977F5</accession>